<feature type="initiator methionine" description="Removed; by host" evidence="1">
    <location>
        <position position="1"/>
    </location>
</feature>
<feature type="chain" id="PRO_0000261222" description="Gag polyprotein">
    <location>
        <begin position="2"/>
        <end position="492"/>
    </location>
</feature>
<feature type="chain" id="PRO_0000246374" description="Matrix protein p17" evidence="1">
    <location>
        <begin position="2"/>
        <end position="128"/>
    </location>
</feature>
<feature type="chain" id="PRO_0000246375" description="Capsid protein p24" evidence="1">
    <location>
        <begin position="129"/>
        <end position="359"/>
    </location>
</feature>
<feature type="peptide" id="PRO_0000246376" description="Spacer peptide 1" evidence="1">
    <location>
        <begin position="360"/>
        <end position="372"/>
    </location>
</feature>
<feature type="chain" id="PRO_0000246377" description="Nucleocapsid protein p7" evidence="1">
    <location>
        <begin position="373"/>
        <end position="427"/>
    </location>
</feature>
<feature type="peptide" id="PRO_0000246378" description="Spacer peptide 2" evidence="1">
    <location>
        <begin position="428"/>
        <end position="443"/>
    </location>
</feature>
<feature type="chain" id="PRO_0000246379" description="p6-gag" evidence="1">
    <location>
        <begin position="444"/>
        <end position="492"/>
    </location>
</feature>
<feature type="zinc finger region" description="CCHC-type 1" evidence="8">
    <location>
        <begin position="385"/>
        <end position="402"/>
    </location>
</feature>
<feature type="zinc finger region" description="CCHC-type 2" evidence="8">
    <location>
        <begin position="406"/>
        <end position="423"/>
    </location>
</feature>
<feature type="region of interest" description="Interaction with Gp41" evidence="6">
    <location>
        <begin position="7"/>
        <end position="31"/>
    </location>
</feature>
<feature type="region of interest" description="Interaction with host CALM1" evidence="5">
    <location>
        <begin position="8"/>
        <end position="43"/>
    </location>
</feature>
<feature type="region of interest" description="Interaction with host AP3D1" evidence="7">
    <location>
        <begin position="12"/>
        <end position="19"/>
    </location>
</feature>
<feature type="region of interest" description="Interaction with membrane phosphatidylinositol 4,5-bisphosphate and RNA" evidence="6">
    <location>
        <begin position="14"/>
        <end position="33"/>
    </location>
</feature>
<feature type="region of interest" description="Interaction with membrane phosphatidylinositol 4,5-bisphosphate" evidence="6">
    <location>
        <begin position="73"/>
        <end position="77"/>
    </location>
</feature>
<feature type="region of interest" description="Disordered" evidence="9">
    <location>
        <begin position="103"/>
        <end position="124"/>
    </location>
</feature>
<feature type="region of interest" description="Interaction with host PPIA/CYPA and NUP153" evidence="6">
    <location>
        <begin position="185"/>
        <end position="223"/>
    </location>
</feature>
<feature type="region of interest" description="PPIA/CYPA-binding loop" evidence="5">
    <location>
        <begin position="213"/>
        <end position="221"/>
    </location>
</feature>
<feature type="region of interest" description="Dimerization/Multimerization of capsid protein p24" evidence="5">
    <location>
        <begin position="273"/>
        <end position="359"/>
    </location>
</feature>
<feature type="region of interest" description="Disordered" evidence="9">
    <location>
        <begin position="432"/>
        <end position="492"/>
    </location>
</feature>
<feature type="short sequence motif" description="Nuclear export signal" evidence="1">
    <location>
        <begin position="16"/>
        <end position="22"/>
    </location>
</feature>
<feature type="short sequence motif" description="Nuclear localization signal" evidence="1">
    <location>
        <begin position="26"/>
        <end position="32"/>
    </location>
</feature>
<feature type="short sequence motif" description="PTAP/PSAP motif">
    <location>
        <begin position="450"/>
        <end position="453"/>
    </location>
</feature>
<feature type="site" description="Cleavage; by viral protease" evidence="1">
    <location>
        <begin position="128"/>
        <end position="129"/>
    </location>
</feature>
<feature type="site" description="Cleavage; by viral protease" evidence="1">
    <location>
        <begin position="359"/>
        <end position="360"/>
    </location>
</feature>
<feature type="site" description="Cleavage; by viral protease" evidence="1">
    <location>
        <begin position="372"/>
        <end position="373"/>
    </location>
</feature>
<feature type="site" description="Cleavage; by viral protease" evidence="1">
    <location>
        <begin position="427"/>
        <end position="428"/>
    </location>
</feature>
<feature type="site" description="Cleavage; by viral protease" evidence="1">
    <location>
        <begin position="443"/>
        <end position="444"/>
    </location>
</feature>
<feature type="modified residue" description="Phosphoserine; by host MAPK1" evidence="6">
    <location>
        <position position="144"/>
    </location>
</feature>
<feature type="modified residue" description="Asymmetric dimethylarginine; in Nucleocapsid protein p7; by host PRMT6" evidence="1">
    <location>
        <position position="404"/>
    </location>
</feature>
<feature type="lipid moiety-binding region" description="N-myristoyl glycine; by host" evidence="1">
    <location>
        <position position="2"/>
    </location>
</feature>
<organism>
    <name type="scientific">Human immunodeficiency virus type 1 group M subtype F2 (isolate MP255)</name>
    <name type="common">HIV-1</name>
    <dbReference type="NCBI Taxonomy" id="388815"/>
    <lineage>
        <taxon>Viruses</taxon>
        <taxon>Riboviria</taxon>
        <taxon>Pararnavirae</taxon>
        <taxon>Artverviricota</taxon>
        <taxon>Revtraviricetes</taxon>
        <taxon>Ortervirales</taxon>
        <taxon>Retroviridae</taxon>
        <taxon>Orthoretrovirinae</taxon>
        <taxon>Lentivirus</taxon>
        <taxon>Human immunodeficiency virus type 1</taxon>
    </lineage>
</organism>
<comment type="function">
    <molecule>Gag polyprotein</molecule>
    <text evidence="5">Mediates, with Gag-Pol polyprotein, the essential events in virion assembly, including binding the plasma membrane, making the protein-protein interactions necessary to create spherical particles, recruiting the viral Env proteins, and packaging the genomic RNA via direct interactions with the RNA packaging sequence (Psi).</text>
</comment>
<comment type="function">
    <molecule>Matrix protein p17</molecule>
    <text evidence="1 6">Targets the polyprotein to the plasma membrane via a multipartite membrane-binding signal, that includes its myristoylated N-terminus (By similarity). Matrix protein is part of the pre-integration complex. Implicated in the release from host cell mediated by Vpu. Binds to RNA (By similarity).</text>
</comment>
<comment type="function">
    <molecule>Capsid protein p24</molecule>
    <text evidence="5 6">Forms the conical core that encapsulates the genomic RNA-nucleocapsid complex in the virion. Most core are conical, with only 7% tubular. The core is constituted by capsid protein hexamer subunits. The core is disassembled soon after virion entry (By similarity). The capsid promotes immune invasion by cloaking viral DNA from CGAS detection (By similarity). Host restriction factors such as TRIM5-alpha or TRIMCyp bind retroviral capsids and cause premature capsid disassembly, leading to blocks in reverse transcription. Capsid restriction by TRIM5 is one of the factors which restricts HIV-1 to the human species. Host PIN1 apparently facilitates the virion uncoating (By similarity). On the other hand, interactions with PDZD8 or CYPA stabilize the capsid (By similarity).</text>
</comment>
<comment type="function">
    <molecule>Nucleocapsid protein p7</molecule>
    <text evidence="5">Encapsulates and protects viral dimeric unspliced genomic RNA (gRNA). Binds these RNAs through its zinc fingers. Acts as a nucleic acid chaperone which is involved in rearangement of nucleic acid secondary structure during gRNA retrotranscription. Also facilitates template switch leading to recombination. As part of the polyprotein, participates in gRNA dimerization, packaging, tRNA incorporation and virion assembly.</text>
</comment>
<comment type="function">
    <molecule>p6-gag</molecule>
    <text evidence="6">Plays a role in budding of the assembled particle by interacting with the host class E VPS proteins TSG101 and PDCD6IP/AIP1.</text>
</comment>
<comment type="subunit">
    <molecule>Gag polyprotein</molecule>
    <text evidence="4 5">Homotrimer; further assembles as hexamers of trimers. Oligomerization possibly creates a central hole into which the cytoplasmic tail of the gp41 envelope protein may be inserted. Interacts with host TRIM22; this interaction seems to disrupt proper trafficking of Gag polyprotein and may interfere with budding. Interacts with host PDZD8. When ubiquitinated, interacts (via p6-gag domain) with host PACSIN2; this interaction allows PACSIN2 recruitment to viral assembly sites and its Interacts with MOV10 (By similarity).</text>
</comment>
<comment type="subunit">
    <molecule>Matrix protein p17</molecule>
    <text evidence="5 6">Homotrimer; further assembles as hexamers of trimers. Interacts with gp41 (via C-terminus). Interacts with host CALM1; this interaction induces a conformational change in the Matrix protein, triggering exposure of the myristate group. Interacts with host AP3D1; this interaction allows the polyprotein trafficking to multivesicular bodies during virus assembly. Part of the pre-integration complex (PIC) which is composed of viral genome, matrix protein, Vpr and integrase.</text>
</comment>
<comment type="subunit">
    <molecule>Capsid protein p24</molecule>
    <text evidence="5 6">Homodimer; the homodimer further multimerizes as homohexamers or homopentamers (By similarity). Interacts with host NUP98 (By similarity). Interacts with host PPIA/CYPA; this interaction stabilizes the capsid (By similarity). Interacts with host NUP153 (By similarity). Interacts with host PDZD8; this interaction stabilizes the capsid. Interacts with host TRIM5; this interaction destabilizes the capsid (By similarity). Interacts with host CPSF6 (By similarity). Interacts with host NONO; the interaction is weak (By similarity).</text>
</comment>
<comment type="subunit">
    <molecule>Nucleocapsid protein p7</molecule>
    <text evidence="6">Interacts with host NUP98.</text>
</comment>
<comment type="subunit">
    <molecule>p6-gag</molecule>
    <text evidence="3 6">Interacts with Vpr; this interaction allows Vpr incorporation into the virion. Interacts with host TSG101. p6-gag interacts with host PDCD6IP/AIP1.</text>
</comment>
<comment type="subcellular location">
    <molecule>Gag polyprotein</molecule>
    <subcellularLocation>
        <location evidence="6">Host cell membrane</location>
        <topology evidence="6">Lipid-anchor</topology>
    </subcellularLocation>
    <subcellularLocation>
        <location evidence="6">Host endosome</location>
        <location evidence="6">Host multivesicular body</location>
    </subcellularLocation>
    <text evidence="6">These locations are probably linked to virus assembly sites. The main location is the cell membrane, but under some circumstances, late endosomal compartments can serve as productive sites for virion assembly.</text>
</comment>
<comment type="subcellular location">
    <molecule>Matrix protein p17</molecule>
    <subcellularLocation>
        <location evidence="6">Virion membrane</location>
        <topology evidence="6">Lipid-anchor</topology>
    </subcellularLocation>
    <subcellularLocation>
        <location evidence="1">Host nucleus</location>
    </subcellularLocation>
    <subcellularLocation>
        <location evidence="1">Host cytoplasm</location>
    </subcellularLocation>
</comment>
<comment type="subcellular location">
    <molecule>Capsid protein p24</molecule>
    <subcellularLocation>
        <location evidence="6">Virion</location>
    </subcellularLocation>
</comment>
<comment type="subcellular location">
    <molecule>Nucleocapsid protein p7</molecule>
    <subcellularLocation>
        <location evidence="6">Virion</location>
    </subcellularLocation>
</comment>
<comment type="alternative products">
    <event type="ribosomal frameshifting"/>
    <isoform>
        <id>Q9QBZ6-1</id>
        <name>Gag polyprotein</name>
        <sequence type="displayed"/>
    </isoform>
    <isoform>
        <id>Q9QBZ5-1</id>
        <name>Gag-Pol polyprotein</name>
        <sequence type="external"/>
    </isoform>
    <text>Translation results in the formation of the Gag polyprotein most of the time. Ribosomal frameshifting at the gag-pol genes boundary occurs at low frequency and produces the Gag-Pol polyprotein. This strategy of translation probably allows the virus to modulate the quantity of each viral protein. Maintenance of a correct Gag to Gag-Pol ratio is essential for RNA dimerization and viral infectivity.</text>
</comment>
<comment type="domain">
    <text evidence="6">Late-budding domains (L domains) are short sequence motifs essential for viral particle budding. They recruit proteins of the host ESCRT machinery (Endosomal Sorting Complex Required for Transport) or ESCRT-associated proteins. p6-gag contains two L domains: a PTAP/PSAP motif, which interacts with the UEV domain of TSG101 and a LYPX(n)L motif which interacts with PDCD6IP/AIP1.</text>
</comment>
<comment type="PTM">
    <text evidence="6">Gag-Pol polyprotein: Specific enzymatic cleavages by the viral protease yield mature proteins.</text>
</comment>
<comment type="PTM">
    <molecule>Matrix protein p17</molecule>
    <text evidence="5">Tyrosine phosphorylated presumably in the virion by a host kinase. Phosphorylation is apparently not a major regulator of membrane association.</text>
</comment>
<comment type="PTM">
    <text evidence="6">Capsid protein p24 is phosphorylated possibly by host MAPK1; this phosphorylation is necessary for Pin1-mediated virion uncoating.</text>
</comment>
<comment type="PTM">
    <text evidence="2">Nucleocapsid protein p7 is methylated by host PRMT6, impairing its function by reducing RNA annealing and the initiation of reverse transcription.</text>
</comment>
<comment type="miscellaneous">
    <text>HIV-1 lineages are divided in three main groups, M (for Major), O (for Outlier), and N (for New, or Non-M, Non-O). The vast majority of strains found worldwide belong to the group M. Group O seems to be endemic to and largely confined to Cameroon and neighboring countries in West Central Africa, where these viruses represent a small minority of HIV-1 strains. The group N is represented by a limited number of isolates from Cameroonian persons. The group M is further subdivided in 9 clades or subtypes (A to D, F to H, J and K).</text>
</comment>
<comment type="miscellaneous">
    <molecule>Isoform Gag polyprotein</molecule>
    <text>Produced by conventional translation.</text>
</comment>
<comment type="similarity">
    <text evidence="10">Belongs to the primate lentivirus group gag polyprotein family.</text>
</comment>
<keyword id="KW-0014">AIDS</keyword>
<keyword id="KW-0167">Capsid protein</keyword>
<keyword id="KW-1032">Host cell membrane</keyword>
<keyword id="KW-1035">Host cytoplasm</keyword>
<keyword id="KW-1039">Host endosome</keyword>
<keyword id="KW-1043">Host membrane</keyword>
<keyword id="KW-1048">Host nucleus</keyword>
<keyword id="KW-0945">Host-virus interaction</keyword>
<keyword id="KW-0449">Lipoprotein</keyword>
<keyword id="KW-0472">Membrane</keyword>
<keyword id="KW-0479">Metal-binding</keyword>
<keyword id="KW-0488">Methylation</keyword>
<keyword id="KW-0519">Myristate</keyword>
<keyword id="KW-0597">Phosphoprotein</keyword>
<keyword id="KW-0677">Repeat</keyword>
<keyword id="KW-0688">Ribosomal frameshifting</keyword>
<keyword id="KW-0694">RNA-binding</keyword>
<keyword id="KW-1198">Viral budding</keyword>
<keyword id="KW-1187">Viral budding via the host ESCRT complexes</keyword>
<keyword id="KW-0543">Viral nucleoprotein</keyword>
<keyword id="KW-1188">Viral release from host cell</keyword>
<keyword id="KW-0946">Virion</keyword>
<keyword id="KW-0862">Zinc</keyword>
<keyword id="KW-0863">Zinc-finger</keyword>
<gene>
    <name type="primary">gag</name>
</gene>
<evidence type="ECO:0000250" key="1"/>
<evidence type="ECO:0000250" key="2">
    <source>
        <dbReference type="UniProtKB" id="P03347"/>
    </source>
</evidence>
<evidence type="ECO:0000250" key="3">
    <source>
        <dbReference type="UniProtKB" id="P03348"/>
    </source>
</evidence>
<evidence type="ECO:0000250" key="4">
    <source>
        <dbReference type="UniProtKB" id="P03349"/>
    </source>
</evidence>
<evidence type="ECO:0000250" key="5">
    <source>
        <dbReference type="UniProtKB" id="P04591"/>
    </source>
</evidence>
<evidence type="ECO:0000250" key="6">
    <source>
        <dbReference type="UniProtKB" id="P12493"/>
    </source>
</evidence>
<evidence type="ECO:0000250" key="7">
    <source>
        <dbReference type="UniProtKB" id="P12497"/>
    </source>
</evidence>
<evidence type="ECO:0000255" key="8">
    <source>
        <dbReference type="PROSITE-ProRule" id="PRU00047"/>
    </source>
</evidence>
<evidence type="ECO:0000256" key="9">
    <source>
        <dbReference type="SAM" id="MobiDB-lite"/>
    </source>
</evidence>
<evidence type="ECO:0000305" key="10"/>
<sequence length="492" mass="54865">MGARASVLSGGKLDAWEKIRLKPGGKKRYRLKHLVWASRELERFALNPSLLETTEGCKKIIGQLQSSLQTGSEELKSLYNAVVVLYYVHQRIDVRDTKEALDKLQEEQDKSQQKEQQKAADKEVSQNYPIVQNIQGQMVHQALSPRTLNAWVKVIEEKAFSPEVIPMFSALSEGATPQDLNTMLNTVGGHQAAMQMLKDTINEEAAEWDRLHPVHAGPIPPGQMREPRGSDIAGTTSTLQEQITWMTGNPPVPVGEIYKRWIILGLNKIVRMYSPVSILDIKQGPKEPFRDYVDRFFKTLRAEQATQEVKNWMTETLLVQNSNPDCKTILKALGPGATLEEMMTACQGVGGPGHKARILAEAMSKATSTAIMMQKSNFKGQKRIVKCFNCGKEGHIARNCRAPRKKGCWKCGKEGHQMKDCTERQANFLGKIWPSNRGRPGNFLQNRPEPTAPPAENFGFGEGITPSPKQEQKGEEQAPPLVSLKSLFGSDP</sequence>
<organismHost>
    <name type="scientific">Homo sapiens</name>
    <name type="common">Human</name>
    <dbReference type="NCBI Taxonomy" id="9606"/>
</organismHost>
<dbReference type="EMBL" id="AJ249236">
    <property type="protein sequence ID" value="CAB58976.1"/>
    <property type="molecule type" value="Genomic_RNA"/>
</dbReference>
<dbReference type="SMR" id="Q9QBZ6"/>
<dbReference type="PRO" id="PR:Q9QBZ6"/>
<dbReference type="Proteomes" id="UP000120463">
    <property type="component" value="Segment"/>
</dbReference>
<dbReference type="GO" id="GO:0042025">
    <property type="term" value="C:host cell nucleus"/>
    <property type="evidence" value="ECO:0007669"/>
    <property type="project" value="UniProtKB-SubCell"/>
</dbReference>
<dbReference type="GO" id="GO:0020002">
    <property type="term" value="C:host cell plasma membrane"/>
    <property type="evidence" value="ECO:0007669"/>
    <property type="project" value="UniProtKB-SubCell"/>
</dbReference>
<dbReference type="GO" id="GO:0072494">
    <property type="term" value="C:host multivesicular body"/>
    <property type="evidence" value="ECO:0007669"/>
    <property type="project" value="UniProtKB-SubCell"/>
</dbReference>
<dbReference type="GO" id="GO:0016020">
    <property type="term" value="C:membrane"/>
    <property type="evidence" value="ECO:0007669"/>
    <property type="project" value="UniProtKB-KW"/>
</dbReference>
<dbReference type="GO" id="GO:0019013">
    <property type="term" value="C:viral nucleocapsid"/>
    <property type="evidence" value="ECO:0007669"/>
    <property type="project" value="UniProtKB-KW"/>
</dbReference>
<dbReference type="GO" id="GO:0055036">
    <property type="term" value="C:virion membrane"/>
    <property type="evidence" value="ECO:0007669"/>
    <property type="project" value="UniProtKB-SubCell"/>
</dbReference>
<dbReference type="GO" id="GO:0003723">
    <property type="term" value="F:RNA binding"/>
    <property type="evidence" value="ECO:0007669"/>
    <property type="project" value="UniProtKB-KW"/>
</dbReference>
<dbReference type="GO" id="GO:0005198">
    <property type="term" value="F:structural molecule activity"/>
    <property type="evidence" value="ECO:0007669"/>
    <property type="project" value="InterPro"/>
</dbReference>
<dbReference type="GO" id="GO:0008270">
    <property type="term" value="F:zinc ion binding"/>
    <property type="evidence" value="ECO:0007669"/>
    <property type="project" value="UniProtKB-KW"/>
</dbReference>
<dbReference type="GO" id="GO:0039702">
    <property type="term" value="P:viral budding via host ESCRT complex"/>
    <property type="evidence" value="ECO:0007669"/>
    <property type="project" value="UniProtKB-KW"/>
</dbReference>
<dbReference type="GO" id="GO:0075523">
    <property type="term" value="P:viral translational frameshifting"/>
    <property type="evidence" value="ECO:0007669"/>
    <property type="project" value="UniProtKB-KW"/>
</dbReference>
<dbReference type="FunFam" id="1.10.1200.30:FF:000001">
    <property type="entry name" value="Gag polyprotein"/>
    <property type="match status" value="1"/>
</dbReference>
<dbReference type="FunFam" id="1.10.375.10:FF:000001">
    <property type="entry name" value="Gag polyprotein"/>
    <property type="match status" value="1"/>
</dbReference>
<dbReference type="FunFam" id="4.10.60.10:FF:000001">
    <property type="entry name" value="Gag polyprotein"/>
    <property type="match status" value="1"/>
</dbReference>
<dbReference type="Gene3D" id="1.10.1200.30">
    <property type="match status" value="1"/>
</dbReference>
<dbReference type="Gene3D" id="6.10.250.390">
    <property type="match status" value="1"/>
</dbReference>
<dbReference type="Gene3D" id="1.10.375.10">
    <property type="entry name" value="Human Immunodeficiency Virus Type 1 Capsid Protein"/>
    <property type="match status" value="1"/>
</dbReference>
<dbReference type="Gene3D" id="1.10.150.90">
    <property type="entry name" value="Immunodeficiency lentiviruses, gag gene matrix protein p17"/>
    <property type="match status" value="1"/>
</dbReference>
<dbReference type="Gene3D" id="1.20.5.760">
    <property type="entry name" value="Single helix bin"/>
    <property type="match status" value="1"/>
</dbReference>
<dbReference type="Gene3D" id="4.10.60.10">
    <property type="entry name" value="Zinc finger, CCHC-type"/>
    <property type="match status" value="1"/>
</dbReference>
<dbReference type="InterPro" id="IPR045345">
    <property type="entry name" value="Gag_p24_C"/>
</dbReference>
<dbReference type="InterPro" id="IPR014817">
    <property type="entry name" value="Gag_p6"/>
</dbReference>
<dbReference type="InterPro" id="IPR000071">
    <property type="entry name" value="Lentvrl_matrix_N"/>
</dbReference>
<dbReference type="InterPro" id="IPR012344">
    <property type="entry name" value="Matrix_HIV/RSV_N"/>
</dbReference>
<dbReference type="InterPro" id="IPR050195">
    <property type="entry name" value="Primate_lentivir_Gag_pol-like"/>
</dbReference>
<dbReference type="InterPro" id="IPR008916">
    <property type="entry name" value="Retrov_capsid_C"/>
</dbReference>
<dbReference type="InterPro" id="IPR008919">
    <property type="entry name" value="Retrov_capsid_N"/>
</dbReference>
<dbReference type="InterPro" id="IPR010999">
    <property type="entry name" value="Retrovr_matrix"/>
</dbReference>
<dbReference type="InterPro" id="IPR001878">
    <property type="entry name" value="Znf_CCHC"/>
</dbReference>
<dbReference type="InterPro" id="IPR036875">
    <property type="entry name" value="Znf_CCHC_sf"/>
</dbReference>
<dbReference type="PANTHER" id="PTHR40389:SF4">
    <property type="match status" value="1"/>
</dbReference>
<dbReference type="PANTHER" id="PTHR40389">
    <property type="entry name" value="ENDOGENOUS RETROVIRUS GROUP K MEMBER 24 GAG POLYPROTEIN-RELATED"/>
    <property type="match status" value="1"/>
</dbReference>
<dbReference type="Pfam" id="PF00540">
    <property type="entry name" value="Gag_p17"/>
    <property type="match status" value="1"/>
</dbReference>
<dbReference type="Pfam" id="PF19317">
    <property type="entry name" value="Gag_p24_C"/>
    <property type="match status" value="1"/>
</dbReference>
<dbReference type="Pfam" id="PF08705">
    <property type="entry name" value="Gag_p6"/>
    <property type="match status" value="1"/>
</dbReference>
<dbReference type="Pfam" id="PF00098">
    <property type="entry name" value="zf-CCHC"/>
    <property type="match status" value="2"/>
</dbReference>
<dbReference type="PRINTS" id="PR00234">
    <property type="entry name" value="HIV1MATRIX"/>
</dbReference>
<dbReference type="SMART" id="SM00343">
    <property type="entry name" value="ZnF_C2HC"/>
    <property type="match status" value="2"/>
</dbReference>
<dbReference type="SUPFAM" id="SSF47836">
    <property type="entry name" value="Retroviral matrix proteins"/>
    <property type="match status" value="1"/>
</dbReference>
<dbReference type="SUPFAM" id="SSF47353">
    <property type="entry name" value="Retrovirus capsid dimerization domain-like"/>
    <property type="match status" value="1"/>
</dbReference>
<dbReference type="SUPFAM" id="SSF47943">
    <property type="entry name" value="Retrovirus capsid protein, N-terminal core domain"/>
    <property type="match status" value="1"/>
</dbReference>
<dbReference type="SUPFAM" id="SSF57756">
    <property type="entry name" value="Retrovirus zinc finger-like domains"/>
    <property type="match status" value="1"/>
</dbReference>
<dbReference type="PROSITE" id="PS50158">
    <property type="entry name" value="ZF_CCHC"/>
    <property type="match status" value="2"/>
</dbReference>
<name>GAG_HV1MP</name>
<proteinExistence type="inferred from homology"/>
<accession>Q9QBZ6</accession>
<reference key="1">
    <citation type="journal article" date="2000" name="AIDS Res. Hum. Retroviruses">
        <title>Near-full-length genome sequencing of divergent African HIV type 1 subtype F viruses leads to the identification of a new HIV type 1 subtype designated K.</title>
        <authorList>
            <person name="Triques K."/>
            <person name="Bourgeois A."/>
            <person name="Vidale N."/>
            <person name="Mpoudi-Ngole E."/>
            <person name="Mulanga-Kabeya C."/>
            <person name="Nzilambi N."/>
            <person name="Torimiro N."/>
            <person name="Saman E."/>
            <person name="Delaporte E."/>
            <person name="Peeters M."/>
        </authorList>
    </citation>
    <scope>NUCLEOTIDE SEQUENCE [GENOMIC RNA]</scope>
</reference>
<protein>
    <recommendedName>
        <fullName>Gag polyprotein</fullName>
    </recommendedName>
    <alternativeName>
        <fullName>Pr55Gag</fullName>
    </alternativeName>
    <component>
        <recommendedName>
            <fullName>Matrix protein p17</fullName>
            <shortName>MA</shortName>
        </recommendedName>
    </component>
    <component>
        <recommendedName>
            <fullName>Capsid protein p24</fullName>
            <shortName>CA</shortName>
        </recommendedName>
    </component>
    <component>
        <recommendedName>
            <fullName evidence="6">Spacer peptide 1</fullName>
            <shortName>SP1</shortName>
        </recommendedName>
        <alternativeName>
            <fullName>p2</fullName>
        </alternativeName>
    </component>
    <component>
        <recommendedName>
            <fullName>Nucleocapsid protein p7</fullName>
            <shortName>NC</shortName>
        </recommendedName>
    </component>
    <component>
        <recommendedName>
            <fullName evidence="6">Spacer peptide 2</fullName>
            <shortName>SP2</shortName>
        </recommendedName>
        <alternativeName>
            <fullName>p1</fullName>
        </alternativeName>
    </component>
    <component>
        <recommendedName>
            <fullName>p6-gag</fullName>
        </recommendedName>
    </component>
</protein>